<reference key="1">
    <citation type="journal article" date="1991" name="Braz. J. Med. Biol. Res.">
        <title>The nifHDK operon in the free-living nitrogen-fixing bacteria Azospirillum brasilense sequentially comprises genes H, D, K, an 353 bp orf and gene Y.</title>
        <authorList>
            <person name="Passaglia L.M.P."/>
            <person name="Nunes C.P."/>
            <person name="Zaha A."/>
            <person name="Schrank I.S."/>
        </authorList>
    </citation>
    <scope>NUCLEOTIDE SEQUENCE [GENOMIC DNA]</scope>
</reference>
<accession>P25316</accession>
<feature type="chain" id="PRO_0000066332" description="Uncharacterized 12.3 kDa protein in nifK-nifY intergenic region">
    <location>
        <begin position="1"/>
        <end position="118"/>
    </location>
</feature>
<feature type="region of interest" description="Disordered" evidence="1">
    <location>
        <begin position="25"/>
        <end position="85"/>
    </location>
</feature>
<feature type="compositionally biased region" description="Low complexity" evidence="1">
    <location>
        <begin position="71"/>
        <end position="83"/>
    </location>
</feature>
<name>YNIF_AZOBR</name>
<dbReference type="EMBL" id="M64344">
    <property type="protein sequence ID" value="AAB02345.1"/>
    <property type="molecule type" value="Genomic_DNA"/>
</dbReference>
<dbReference type="PIR" id="S27476">
    <property type="entry name" value="S27476"/>
</dbReference>
<dbReference type="SMR" id="P25316"/>
<organism>
    <name type="scientific">Azospirillum brasilense</name>
    <dbReference type="NCBI Taxonomy" id="192"/>
    <lineage>
        <taxon>Bacteria</taxon>
        <taxon>Pseudomonadati</taxon>
        <taxon>Pseudomonadota</taxon>
        <taxon>Alphaproteobacteria</taxon>
        <taxon>Rhodospirillales</taxon>
        <taxon>Azospirillaceae</taxon>
        <taxon>Azospirillum</taxon>
    </lineage>
</organism>
<proteinExistence type="predicted"/>
<protein>
    <recommendedName>
        <fullName>Uncharacterized 12.3 kDa protein in nifK-nifY intergenic region</fullName>
    </recommendedName>
</protein>
<sequence length="118" mass="12324">MAHLTQSVEYASTACCWLAGGRHAAEQPGSGGIAGNLPAPSSPRSFRSWRRRGSSRPAKGSRVTACQGAGRPSASSSSSTPSRARSRCCECQEIRGRCAVFDDRPPDWATSASAPSTP</sequence>
<evidence type="ECO:0000256" key="1">
    <source>
        <dbReference type="SAM" id="MobiDB-lite"/>
    </source>
</evidence>